<keyword id="KW-0002">3D-structure</keyword>
<keyword id="KW-0963">Cytoplasm</keyword>
<keyword id="KW-1185">Reference proteome</keyword>
<keyword id="KW-0687">Ribonucleoprotein</keyword>
<keyword id="KW-0689">Ribosomal protein</keyword>
<proteinExistence type="evidence at protein level"/>
<organism>
    <name type="scientific">Candida albicans (strain SC5314 / ATCC MYA-2876)</name>
    <name type="common">Yeast</name>
    <dbReference type="NCBI Taxonomy" id="237561"/>
    <lineage>
        <taxon>Eukaryota</taxon>
        <taxon>Fungi</taxon>
        <taxon>Dikarya</taxon>
        <taxon>Ascomycota</taxon>
        <taxon>Saccharomycotina</taxon>
        <taxon>Pichiomycetes</taxon>
        <taxon>Debaryomycetaceae</taxon>
        <taxon>Candida/Lodderomyces clade</taxon>
        <taxon>Candida</taxon>
    </lineage>
</organism>
<sequence length="151" mass="16946">MGRMHSSGKGISSSALPYSRNAPSWFKLSSDDVVEQIIKYARKGLTPSQIGVILRDAHGVSQAKVVTGNKILRILKSNGLAPEIPEDLYYLIKKAVSVRKHLEKNRKDKDSKFRLILIESRIHRLARYYRTVAVLPPNWKYESATASALVA</sequence>
<protein>
    <recommendedName>
        <fullName evidence="2">Small ribosomal subunit protein uS15</fullName>
    </recommendedName>
    <alternativeName>
        <fullName>40S ribosomal protein S13</fullName>
    </alternativeName>
</protein>
<accession>A0A1D8PPE0</accession>
<dbReference type="EMBL" id="CP017628">
    <property type="protein sequence ID" value="AOW30011.1"/>
    <property type="molecule type" value="Genomic_DNA"/>
</dbReference>
<dbReference type="RefSeq" id="XP_019330988.1">
    <property type="nucleotide sequence ID" value="XM_019475443.1"/>
</dbReference>
<dbReference type="PDB" id="7PZY">
    <property type="method" value="EM"/>
    <property type="resolution" value="2.32 A"/>
    <property type="chains" value="O=1-151"/>
</dbReference>
<dbReference type="PDB" id="7Q08">
    <property type="method" value="EM"/>
    <property type="resolution" value="2.56 A"/>
    <property type="chains" value="O=1-151"/>
</dbReference>
<dbReference type="PDB" id="7Q0F">
    <property type="method" value="EM"/>
    <property type="resolution" value="2.64 A"/>
    <property type="chains" value="O=1-151"/>
</dbReference>
<dbReference type="PDB" id="7Q0P">
    <property type="method" value="EM"/>
    <property type="resolution" value="2.77 A"/>
    <property type="chains" value="O=1-151"/>
</dbReference>
<dbReference type="PDB" id="7Q0R">
    <property type="method" value="EM"/>
    <property type="resolution" value="2.67 A"/>
    <property type="chains" value="O=1-151"/>
</dbReference>
<dbReference type="PDB" id="8C3A">
    <property type="method" value="X-ray"/>
    <property type="resolution" value="3.00 A"/>
    <property type="chains" value="DA/P=1-151"/>
</dbReference>
<dbReference type="PDB" id="8OGJ">
    <property type="method" value="EM"/>
    <property type="resolution" value="3.10 A"/>
    <property type="chains" value="O=1-151"/>
</dbReference>
<dbReference type="PDB" id="8OH6">
    <property type="method" value="X-ray"/>
    <property type="resolution" value="3.35 A"/>
    <property type="chains" value="DA/P=1-151"/>
</dbReference>
<dbReference type="PDB" id="8OI5">
    <property type="method" value="X-ray"/>
    <property type="resolution" value="2.90 A"/>
    <property type="chains" value="DA/P=1-151"/>
</dbReference>
<dbReference type="PDB" id="8OJ3">
    <property type="method" value="X-ray"/>
    <property type="resolution" value="3.50 A"/>
    <property type="chains" value="DA/P=1-151"/>
</dbReference>
<dbReference type="PDBsum" id="7PZY"/>
<dbReference type="PDBsum" id="7Q08"/>
<dbReference type="PDBsum" id="7Q0F"/>
<dbReference type="PDBsum" id="7Q0P"/>
<dbReference type="PDBsum" id="7Q0R"/>
<dbReference type="PDBsum" id="8C3A"/>
<dbReference type="PDBsum" id="8OGJ"/>
<dbReference type="PDBsum" id="8OH6"/>
<dbReference type="PDBsum" id="8OI5"/>
<dbReference type="PDBsum" id="8OJ3"/>
<dbReference type="EMDB" id="EMD-13737"/>
<dbReference type="EMDB" id="EMD-13741"/>
<dbReference type="EMDB" id="EMD-13744"/>
<dbReference type="EMDB" id="EMD-13749"/>
<dbReference type="EMDB" id="EMD-13750"/>
<dbReference type="SMR" id="A0A1D8PPE0"/>
<dbReference type="FunCoup" id="A0A1D8PPE0">
    <property type="interactions" value="1007"/>
</dbReference>
<dbReference type="STRING" id="237561.A0A1D8PPE0"/>
<dbReference type="EnsemblFungi" id="C6_00650C_A-T">
    <property type="protein sequence ID" value="C6_00650C_A-T-p1"/>
    <property type="gene ID" value="C6_00650C_A"/>
</dbReference>
<dbReference type="GeneID" id="30515328"/>
<dbReference type="KEGG" id="cal:CAALFM_C600650CA"/>
<dbReference type="CGD" id="CAL0000187390">
    <property type="gene designation" value="RPS13"/>
</dbReference>
<dbReference type="VEuPathDB" id="FungiDB:C6_00650C_A"/>
<dbReference type="InParanoid" id="A0A1D8PPE0"/>
<dbReference type="OMA" id="MHTRRKG"/>
<dbReference type="OrthoDB" id="623277at2759"/>
<dbReference type="Proteomes" id="UP000000559">
    <property type="component" value="Chromosome 6"/>
</dbReference>
<dbReference type="GO" id="GO:0022627">
    <property type="term" value="C:cytosolic small ribosomal subunit"/>
    <property type="evidence" value="ECO:0000318"/>
    <property type="project" value="GO_Central"/>
</dbReference>
<dbReference type="GO" id="GO:0030446">
    <property type="term" value="C:hyphal cell wall"/>
    <property type="evidence" value="ECO:0000314"/>
    <property type="project" value="CGD"/>
</dbReference>
<dbReference type="GO" id="GO:0005730">
    <property type="term" value="C:nucleolus"/>
    <property type="evidence" value="ECO:0000318"/>
    <property type="project" value="GO_Central"/>
</dbReference>
<dbReference type="GO" id="GO:0070181">
    <property type="term" value="F:small ribosomal subunit rRNA binding"/>
    <property type="evidence" value="ECO:0000318"/>
    <property type="project" value="GO_Central"/>
</dbReference>
<dbReference type="GO" id="GO:0003735">
    <property type="term" value="F:structural constituent of ribosome"/>
    <property type="evidence" value="ECO:0000318"/>
    <property type="project" value="GO_Central"/>
</dbReference>
<dbReference type="GO" id="GO:0006412">
    <property type="term" value="P:translation"/>
    <property type="evidence" value="ECO:0007669"/>
    <property type="project" value="InterPro"/>
</dbReference>
<dbReference type="CDD" id="cd00353">
    <property type="entry name" value="Ribosomal_S15p_S13e"/>
    <property type="match status" value="1"/>
</dbReference>
<dbReference type="FunFam" id="1.10.287.10:FF:000003">
    <property type="entry name" value="40S ribosomal protein S13"/>
    <property type="match status" value="1"/>
</dbReference>
<dbReference type="FunFam" id="4.10.860.130:FF:000001">
    <property type="entry name" value="40S ribosomal protein S13"/>
    <property type="match status" value="1"/>
</dbReference>
<dbReference type="Gene3D" id="4.10.860.130">
    <property type="match status" value="1"/>
</dbReference>
<dbReference type="Gene3D" id="1.10.287.10">
    <property type="entry name" value="S15/NS1, RNA-binding"/>
    <property type="match status" value="1"/>
</dbReference>
<dbReference type="HAMAP" id="MF_01343_A">
    <property type="entry name" value="Ribosomal_uS15_A"/>
    <property type="match status" value="1"/>
</dbReference>
<dbReference type="InterPro" id="IPR000589">
    <property type="entry name" value="Ribosomal_uS15"/>
</dbReference>
<dbReference type="InterPro" id="IPR023029">
    <property type="entry name" value="Ribosomal_uS15_arc_euk"/>
</dbReference>
<dbReference type="InterPro" id="IPR012606">
    <property type="entry name" value="Ribosomal_uS15_N"/>
</dbReference>
<dbReference type="InterPro" id="IPR009068">
    <property type="entry name" value="uS15_NS1_RNA-bd_sf"/>
</dbReference>
<dbReference type="NCBIfam" id="NF006331">
    <property type="entry name" value="PRK08561.1"/>
    <property type="match status" value="1"/>
</dbReference>
<dbReference type="PANTHER" id="PTHR11885">
    <property type="entry name" value="RIBOSOMAL PROTEIN S15P/S13E"/>
    <property type="match status" value="1"/>
</dbReference>
<dbReference type="PANTHER" id="PTHR11885:SF6">
    <property type="entry name" value="SMALL RIBOSOMAL SUBUNIT PROTEIN US15"/>
    <property type="match status" value="1"/>
</dbReference>
<dbReference type="Pfam" id="PF08069">
    <property type="entry name" value="Ribosomal_S13_N"/>
    <property type="match status" value="1"/>
</dbReference>
<dbReference type="Pfam" id="PF00312">
    <property type="entry name" value="Ribosomal_S15"/>
    <property type="match status" value="1"/>
</dbReference>
<dbReference type="SMART" id="SM01386">
    <property type="entry name" value="Ribosomal_S13_N"/>
    <property type="match status" value="1"/>
</dbReference>
<dbReference type="SMART" id="SM01387">
    <property type="entry name" value="Ribosomal_S15"/>
    <property type="match status" value="1"/>
</dbReference>
<dbReference type="SUPFAM" id="SSF47060">
    <property type="entry name" value="S15/NS1 RNA-binding domain"/>
    <property type="match status" value="1"/>
</dbReference>
<dbReference type="PROSITE" id="PS00362">
    <property type="entry name" value="RIBOSOMAL_S15"/>
    <property type="match status" value="1"/>
</dbReference>
<gene>
    <name type="primary">RPS13</name>
    <name type="ordered locus">orf19.4193.1</name>
    <name type="ORF">CAALFM_C600650CA</name>
</gene>
<evidence type="ECO:0000269" key="1">
    <source>
    </source>
</evidence>
<evidence type="ECO:0000303" key="2">
    <source>
    </source>
</evidence>
<evidence type="ECO:0000305" key="3"/>
<evidence type="ECO:0000305" key="4">
    <source>
    </source>
</evidence>
<evidence type="ECO:0007744" key="5">
    <source>
        <dbReference type="PDB" id="7PZY"/>
    </source>
</evidence>
<evidence type="ECO:0007744" key="6">
    <source>
        <dbReference type="PDB" id="7Q0F"/>
    </source>
</evidence>
<evidence type="ECO:0007744" key="7">
    <source>
        <dbReference type="PDB" id="7Q0P"/>
    </source>
</evidence>
<feature type="chain" id="PRO_0000456551" description="Small ribosomal subunit protein uS15">
    <location>
        <begin position="1"/>
        <end position="151"/>
    </location>
</feature>
<name>RS13_CANAL</name>
<reference key="1">
    <citation type="journal article" date="2004" name="Proc. Natl. Acad. Sci. U.S.A.">
        <title>The diploid genome sequence of Candida albicans.</title>
        <authorList>
            <person name="Jones T."/>
            <person name="Federspiel N.A."/>
            <person name="Chibana H."/>
            <person name="Dungan J."/>
            <person name="Kalman S."/>
            <person name="Magee B.B."/>
            <person name="Newport G."/>
            <person name="Thorstenson Y.R."/>
            <person name="Agabian N."/>
            <person name="Magee P.T."/>
            <person name="Davis R.W."/>
            <person name="Scherer S."/>
        </authorList>
    </citation>
    <scope>NUCLEOTIDE SEQUENCE [LARGE SCALE GENOMIC DNA]</scope>
    <source>
        <strain>SC5314 / ATCC MYA-2876</strain>
    </source>
</reference>
<reference key="2">
    <citation type="journal article" date="2007" name="Genome Biol.">
        <title>Assembly of the Candida albicans genome into sixteen supercontigs aligned on the eight chromosomes.</title>
        <authorList>
            <person name="van het Hoog M."/>
            <person name="Rast T.J."/>
            <person name="Martchenko M."/>
            <person name="Grindle S."/>
            <person name="Dignard D."/>
            <person name="Hogues H."/>
            <person name="Cuomo C."/>
            <person name="Berriman M."/>
            <person name="Scherer S."/>
            <person name="Magee B.B."/>
            <person name="Whiteway M."/>
            <person name="Chibana H."/>
            <person name="Nantel A."/>
            <person name="Magee P.T."/>
        </authorList>
    </citation>
    <scope>GENOME REANNOTATION</scope>
    <source>
        <strain>SC5314 / ATCC MYA-2876</strain>
    </source>
</reference>
<reference key="3">
    <citation type="journal article" date="2013" name="Genome Biol.">
        <title>Assembly of a phased diploid Candida albicans genome facilitates allele-specific measurements and provides a simple model for repeat and indel structure.</title>
        <authorList>
            <person name="Muzzey D."/>
            <person name="Schwartz K."/>
            <person name="Weissman J.S."/>
            <person name="Sherlock G."/>
        </authorList>
    </citation>
    <scope>NUCLEOTIDE SEQUENCE [LARGE SCALE GENOMIC DNA]</scope>
    <scope>GENOME REANNOTATION</scope>
    <source>
        <strain>SC5314 / ATCC MYA-2876</strain>
    </source>
</reference>
<reference evidence="5 6 7" key="4">
    <citation type="journal article" date="2022" name="Sci. Adv.">
        <title>E-site drug specificity of the human pathogen Candida albicans ribosome.</title>
        <authorList>
            <person name="Zgadzay Y."/>
            <person name="Kolosova O."/>
            <person name="Stetsenko A."/>
            <person name="Wu C."/>
            <person name="Bruchlen D."/>
            <person name="Usachev K."/>
            <person name="Validov S."/>
            <person name="Jenner L."/>
            <person name="Rogachev A."/>
            <person name="Yusupova G."/>
            <person name="Sachs M.S."/>
            <person name="Guskov A."/>
            <person name="Yusupov M."/>
        </authorList>
    </citation>
    <scope>STRUCTURE BY ELECTRON MICROSCOPY (2.32 ANGSTROMS) OF THE 80S RIBOSOME</scope>
    <scope>SUBUNIT</scope>
</reference>
<comment type="function">
    <text evidence="4">Component of the ribosome, a large ribonucleoprotein complex responsible for the synthesis of proteins in the cell. The small ribosomal subunit (SSU) binds messenger RNAs (mRNAs) and translates the encoded message by selecting cognate aminoacyl-transfer RNA (tRNA) molecules. The large subunit (LSU) contains the ribosomal catalytic site termed the peptidyl transferase center (PTC), which catalyzes the formation of peptide bonds, thereby polymerizing the amino acids delivered by tRNAs into a polypeptide chain. The nascent polypeptides leave the ribosome through a tunnel in the LSU and interact with protein factors that function in enzymatic processing, targeting, and the membrane insertion of nascent chains at the exit of the ribosomal tunnel.</text>
</comment>
<comment type="subunit">
    <text evidence="1">Component of the small ribosomal subunit (PubMed:35613268). Mature ribosomes consist of a small (40S) and a large (60S) subunit (PubMed:35613268). The 40S subunit contains about 32 different proteins and 1 molecule of RNA (18S) (PubMed:35613268). The 60S subunit contains 45 different proteins and 3 molecules of RNA (25S, 5.8S and 5S) (PubMed:35613268).</text>
</comment>
<comment type="subcellular location">
    <subcellularLocation>
        <location evidence="4">Cytoplasm</location>
    </subcellularLocation>
</comment>
<comment type="similarity">
    <text evidence="3">Belongs to the universal ribosomal protein uS15 family.</text>
</comment>